<gene>
    <name type="primary">capza1</name>
    <name type="synonym">capza</name>
</gene>
<feature type="chain" id="PRO_0000208636" description="F-actin-capping protein subunit alpha-1">
    <location>
        <begin position="1" status="less than"/>
        <end position="256"/>
    </location>
</feature>
<feature type="non-terminal residue">
    <location>
        <position position="1"/>
    </location>
</feature>
<reference key="1">
    <citation type="journal article" date="1989" name="Nature">
        <title>Identification of a widespread nuclear actin binding protein.</title>
        <authorList>
            <person name="Ankenbauer T."/>
            <person name="Kleinschmidt J.A."/>
            <person name="Walsh M.J."/>
            <person name="Weiner O.H."/>
            <person name="Franke W.W."/>
        </authorList>
    </citation>
    <scope>NUCLEOTIDE SEQUENCE [MRNA]</scope>
    <scope>PARTIAL PROTEIN SEQUENCE</scope>
    <scope>FUNCTION</scope>
    <source>
        <tissue>Oocyte</tissue>
    </source>
</reference>
<proteinExistence type="evidence at protein level"/>
<name>CAZA1_XENLA</name>
<evidence type="ECO:0000250" key="1">
    <source>
        <dbReference type="UniProtKB" id="A0PFK5"/>
    </source>
</evidence>
<evidence type="ECO:0000250" key="2">
    <source>
        <dbReference type="UniProtKB" id="P52907"/>
    </source>
</evidence>
<evidence type="ECO:0000269" key="3">
    <source>
    </source>
</evidence>
<evidence type="ECO:0000305" key="4"/>
<protein>
    <recommendedName>
        <fullName>F-actin-capping protein subunit alpha-1</fullName>
    </recommendedName>
    <alternativeName>
        <fullName>Actin-binding protein chain A</fullName>
        <shortName>ABP-A</shortName>
    </alternativeName>
</protein>
<dbReference type="EMBL" id="X51605">
    <property type="protein sequence ID" value="CAA35948.1"/>
    <property type="molecule type" value="mRNA"/>
</dbReference>
<dbReference type="PIR" id="S07105">
    <property type="entry name" value="S07105"/>
</dbReference>
<dbReference type="SMR" id="P25229"/>
<dbReference type="IntAct" id="P25229">
    <property type="interactions" value="1"/>
</dbReference>
<dbReference type="MINT" id="P25229"/>
<dbReference type="AGR" id="Xenbase:XB-GENE-865890"/>
<dbReference type="Xenbase" id="XB-GENE-865890">
    <property type="gene designation" value="capza1.L"/>
</dbReference>
<dbReference type="Proteomes" id="UP000186698">
    <property type="component" value="Unplaced"/>
</dbReference>
<dbReference type="GO" id="GO:0030863">
    <property type="term" value="C:cortical cytoskeleton"/>
    <property type="evidence" value="ECO:0000318"/>
    <property type="project" value="GO_Central"/>
</dbReference>
<dbReference type="GO" id="GO:0008290">
    <property type="term" value="C:F-actin capping protein complex"/>
    <property type="evidence" value="ECO:0000318"/>
    <property type="project" value="GO_Central"/>
</dbReference>
<dbReference type="GO" id="GO:0071203">
    <property type="term" value="C:WASH complex"/>
    <property type="evidence" value="ECO:0000250"/>
    <property type="project" value="UniProtKB"/>
</dbReference>
<dbReference type="GO" id="GO:0051015">
    <property type="term" value="F:actin filament binding"/>
    <property type="evidence" value="ECO:0000318"/>
    <property type="project" value="GO_Central"/>
</dbReference>
<dbReference type="GO" id="GO:0030036">
    <property type="term" value="P:actin cytoskeleton organization"/>
    <property type="evidence" value="ECO:0000318"/>
    <property type="project" value="GO_Central"/>
</dbReference>
<dbReference type="GO" id="GO:0051016">
    <property type="term" value="P:barbed-end actin filament capping"/>
    <property type="evidence" value="ECO:0000318"/>
    <property type="project" value="GO_Central"/>
</dbReference>
<dbReference type="GO" id="GO:0034329">
    <property type="term" value="P:cell junction assembly"/>
    <property type="evidence" value="ECO:0000250"/>
    <property type="project" value="UniProtKB"/>
</dbReference>
<dbReference type="FunFam" id="3.90.1150.210:FF:000002">
    <property type="entry name" value="F-actin-capping protein subunit alpha"/>
    <property type="match status" value="1"/>
</dbReference>
<dbReference type="Gene3D" id="3.30.1140.60">
    <property type="entry name" value="F-actin capping protein, alpha subunit"/>
    <property type="match status" value="1"/>
</dbReference>
<dbReference type="Gene3D" id="3.90.1150.210">
    <property type="entry name" value="F-actin capping protein, beta subunit"/>
    <property type="match status" value="1"/>
</dbReference>
<dbReference type="InterPro" id="IPR002189">
    <property type="entry name" value="CapZ_alpha"/>
</dbReference>
<dbReference type="InterPro" id="IPR037282">
    <property type="entry name" value="CapZ_alpha/beta"/>
</dbReference>
<dbReference type="InterPro" id="IPR042276">
    <property type="entry name" value="CapZ_alpha/beta_2"/>
</dbReference>
<dbReference type="InterPro" id="IPR042489">
    <property type="entry name" value="CapZ_alpha_1"/>
</dbReference>
<dbReference type="InterPro" id="IPR017865">
    <property type="entry name" value="F-actin_cap_asu_CS"/>
</dbReference>
<dbReference type="PANTHER" id="PTHR10653">
    <property type="entry name" value="F-ACTIN-CAPPING PROTEIN SUBUNIT ALPHA"/>
    <property type="match status" value="1"/>
</dbReference>
<dbReference type="PANTHER" id="PTHR10653:SF5">
    <property type="entry name" value="F-ACTIN-CAPPING PROTEIN SUBUNIT ALPHA-1"/>
    <property type="match status" value="1"/>
</dbReference>
<dbReference type="Pfam" id="PF01267">
    <property type="entry name" value="F-actin_cap_A"/>
    <property type="match status" value="1"/>
</dbReference>
<dbReference type="PRINTS" id="PR00191">
    <property type="entry name" value="FACTINCAPA"/>
</dbReference>
<dbReference type="SUPFAM" id="SSF90096">
    <property type="entry name" value="Subunits of heterodimeric actin filament capping protein Capz"/>
    <property type="match status" value="1"/>
</dbReference>
<dbReference type="PROSITE" id="PS00748">
    <property type="entry name" value="F_ACTIN_CAPPING_A_1"/>
    <property type="match status" value="1"/>
</dbReference>
<dbReference type="PROSITE" id="PS00749">
    <property type="entry name" value="F_ACTIN_CAPPING_A_2"/>
    <property type="match status" value="1"/>
</dbReference>
<accession>P25229</accession>
<comment type="function">
    <text evidence="1 2 3">F-actin-capping proteins bind in a Ca(2+)-independent manner to the fast growing ends of actin filaments (barbed end) thereby blocking the exchange of subunits at these ends. Unlike other capping proteins (such as gelsolin and severin), these proteins do not sever actin filaments (PubMed:2689884). May play a role in the formation of epithelial cell junctions (By similarity). Forms, with CAPZB, the barbed end of the fast growing ends of actin filaments in the dynactin complex and stabilizes dynactin structure. The dynactin multiprotein complex activates the molecular motor dynein for ultra-processive transport along microtubules (By similarity).</text>
</comment>
<comment type="subunit">
    <text evidence="1 2">Component of the F-actin capping complex, composed of a heterodimer of an alpha and a beta subunit. Subunit of dynactin, a multiprotein complex part of a tripartite complex with dynein and a adapter, such as BICDL1, BICD2 or HOOK3. The dynactin complex is built around ACTR1A/ACTB filament and consists of an actin-related filament composed of a shoulder domain, a pointed end and a barbed end. Its length is defined by its flexible shoulder domain. The soulder is composed of 2 DCTN1 subunits, 4 DCTN2 and 2 DCTN3. The 4 DCNT2 (via N-terminus) bind the ACTR1A filament and act as molecular rulers to determine the length. The pointed end is important for binding dynein-dynactin cargo adapters (By similarity). Component of the WASH complex (By similarity).</text>
</comment>
<comment type="subcellular location">
    <subcellularLocation>
        <location evidence="1">Cytoplasm</location>
        <location evidence="1">Cytoskeleton</location>
    </subcellularLocation>
</comment>
<comment type="similarity">
    <text evidence="4">Belongs to the F-actin-capping protein alpha subunit family.</text>
</comment>
<keyword id="KW-0009">Actin-binding</keyword>
<keyword id="KW-0963">Cytoplasm</keyword>
<keyword id="KW-0206">Cytoskeleton</keyword>
<keyword id="KW-0903">Direct protein sequencing</keyword>
<keyword id="KW-1185">Reference proteome</keyword>
<organism>
    <name type="scientific">Xenopus laevis</name>
    <name type="common">African clawed frog</name>
    <dbReference type="NCBI Taxonomy" id="8355"/>
    <lineage>
        <taxon>Eukaryota</taxon>
        <taxon>Metazoa</taxon>
        <taxon>Chordata</taxon>
        <taxon>Craniata</taxon>
        <taxon>Vertebrata</taxon>
        <taxon>Euteleostomi</taxon>
        <taxon>Amphibia</taxon>
        <taxon>Batrachia</taxon>
        <taxon>Anura</taxon>
        <taxon>Pipoidea</taxon>
        <taxon>Pipidae</taxon>
        <taxon>Xenopodinae</taxon>
        <taxon>Xenopus</taxon>
        <taxon>Xenopus</taxon>
    </lineage>
</organism>
<sequence>EVFNDVRLLLNNDNLLREGAAHAFAQYNMDQFTPAKIEGYDDQVLITEHGDLGNSRFLDPRNRITFKFDHLRKEASDPHPDDSDVALKSWRDACDLALRAYVKEHYPNGVCTVYGKTIDGQQTIVSCIESHQFQPKNFWNGRWRSEWKFTISGSTAQLVGVLKIQVHYYEDGNVQLVSHKDVQESITISGEAQTAKEFVKIIEQAESDYQTAISENYQTMSDTTFKALRRQLPVTRTKIDWNKILSYKIGKEMQNA</sequence>